<name>SECR_CANLF</name>
<protein>
    <recommendedName>
        <fullName evidence="7">Secretin</fullName>
    </recommendedName>
</protein>
<sequence length="27" mass="3070">HSDGTFTSELSRLRESARLQRLLQGLV</sequence>
<reference key="1">
    <citation type="journal article" date="1987" name="Life Sci.">
        <title>Dog secretin: sequence and biologic activity.</title>
        <authorList>
            <person name="Shinomura Y."/>
            <person name="Eng J."/>
            <person name="Yalow R.S."/>
        </authorList>
    </citation>
    <scope>PROTEIN SEQUENCE</scope>
    <scope>FUNCTION</scope>
    <scope>SUBCELLULAR LOCATION</scope>
    <source>
        <tissue>Intestine</tissue>
    </source>
</reference>
<reference key="2">
    <citation type="journal article" date="1961" name="Am. J. Physiol.">
        <title>Action of secretin on pancreatic secretion.</title>
        <authorList>
            <person name="Christodoulopoulos J.B."/>
            <person name="Jacobs W.H."/>
            <person name="Klotz A.P."/>
        </authorList>
    </citation>
    <scope>FUNCTION</scope>
</reference>
<keyword id="KW-0027">Amidation</keyword>
<keyword id="KW-0903">Direct protein sequencing</keyword>
<keyword id="KW-0372">Hormone</keyword>
<keyword id="KW-1185">Reference proteome</keyword>
<keyword id="KW-0964">Secreted</keyword>
<gene>
    <name evidence="1" type="primary">SCT</name>
</gene>
<dbReference type="PIR" id="A27267">
    <property type="entry name" value="A27267"/>
</dbReference>
<dbReference type="SMR" id="P09910"/>
<dbReference type="InParanoid" id="P09910"/>
<dbReference type="OrthoDB" id="9417777at2759"/>
<dbReference type="Proteomes" id="UP000002254">
    <property type="component" value="Unplaced"/>
</dbReference>
<dbReference type="Proteomes" id="UP000694429">
    <property type="component" value="Unplaced"/>
</dbReference>
<dbReference type="Proteomes" id="UP000694542">
    <property type="component" value="Unplaced"/>
</dbReference>
<dbReference type="Proteomes" id="UP000805418">
    <property type="component" value="Unplaced"/>
</dbReference>
<dbReference type="GO" id="GO:0005576">
    <property type="term" value="C:extracellular region"/>
    <property type="evidence" value="ECO:0007669"/>
    <property type="project" value="UniProtKB-SubCell"/>
</dbReference>
<dbReference type="GO" id="GO:0046659">
    <property type="term" value="F:digestive hormone activity"/>
    <property type="evidence" value="ECO:0000314"/>
    <property type="project" value="UniProtKB"/>
</dbReference>
<dbReference type="GO" id="GO:0007189">
    <property type="term" value="P:adenylate cyclase-activating G protein-coupled receptor signaling pathway"/>
    <property type="evidence" value="ECO:0000250"/>
    <property type="project" value="UniProtKB"/>
</dbReference>
<dbReference type="GO" id="GO:0002024">
    <property type="term" value="P:diet induced thermogenesis"/>
    <property type="evidence" value="ECO:0000250"/>
    <property type="project" value="UniProtKB"/>
</dbReference>
<dbReference type="GO" id="GO:0021766">
    <property type="term" value="P:hippocampus development"/>
    <property type="evidence" value="ECO:0000250"/>
    <property type="project" value="UniProtKB"/>
</dbReference>
<dbReference type="GO" id="GO:0050996">
    <property type="term" value="P:positive regulation of lipid catabolic process"/>
    <property type="evidence" value="ECO:0000250"/>
    <property type="project" value="UniProtKB"/>
</dbReference>
<dbReference type="GO" id="GO:0032098">
    <property type="term" value="P:regulation of appetite"/>
    <property type="evidence" value="ECO:0000250"/>
    <property type="project" value="UniProtKB"/>
</dbReference>
<dbReference type="GO" id="GO:0048167">
    <property type="term" value="P:regulation of synaptic plasticity"/>
    <property type="evidence" value="ECO:0000250"/>
    <property type="project" value="UniProtKB"/>
</dbReference>
<dbReference type="GO" id="GO:0031667">
    <property type="term" value="P:response to nutrient levels"/>
    <property type="evidence" value="ECO:0000250"/>
    <property type="project" value="UniProtKB"/>
</dbReference>
<dbReference type="Gene3D" id="6.10.250.590">
    <property type="match status" value="1"/>
</dbReference>
<dbReference type="InterPro" id="IPR000532">
    <property type="entry name" value="Glucagon_GIP_secretin_VIP"/>
</dbReference>
<dbReference type="InterPro" id="IPR015675">
    <property type="entry name" value="Prosecretin"/>
</dbReference>
<dbReference type="PANTHER" id="PTHR17378">
    <property type="entry name" value="SECRETIN"/>
    <property type="match status" value="1"/>
</dbReference>
<dbReference type="PANTHER" id="PTHR17378:SF1">
    <property type="entry name" value="SECRETIN"/>
    <property type="match status" value="1"/>
</dbReference>
<dbReference type="Pfam" id="PF00123">
    <property type="entry name" value="Hormone_2"/>
    <property type="match status" value="1"/>
</dbReference>
<dbReference type="SMART" id="SM00070">
    <property type="entry name" value="GLUCA"/>
    <property type="match status" value="1"/>
</dbReference>
<dbReference type="PROSITE" id="PS00260">
    <property type="entry name" value="GLUCAGON"/>
    <property type="match status" value="1"/>
</dbReference>
<feature type="peptide" id="PRO_0000043934" description="Secretin" evidence="5">
    <location>
        <begin position="1"/>
        <end position="27"/>
    </location>
</feature>
<feature type="modified residue" description="Valine amide" evidence="3">
    <location>
        <position position="27"/>
    </location>
</feature>
<evidence type="ECO:0000250" key="1">
    <source>
        <dbReference type="UniProtKB" id="P09683"/>
    </source>
</evidence>
<evidence type="ECO:0000250" key="2">
    <source>
        <dbReference type="UniProtKB" id="P11384"/>
    </source>
</evidence>
<evidence type="ECO:0000250" key="3">
    <source>
        <dbReference type="UniProtKB" id="P63298"/>
    </source>
</evidence>
<evidence type="ECO:0000250" key="4">
    <source>
        <dbReference type="UniProtKB" id="Q08535"/>
    </source>
</evidence>
<evidence type="ECO:0000269" key="5">
    <source>
    </source>
</evidence>
<evidence type="ECO:0000269" key="6">
    <source>
    </source>
</evidence>
<evidence type="ECO:0000303" key="7">
    <source>
    </source>
</evidence>
<evidence type="ECO:0000305" key="8"/>
<comment type="function">
    <text evidence="2 4 5 6">Hormone involved in different processes, such as regulation of the pH of the duodenal content, food intake and water homeostasis (By similarity). Exerts its biological effects by binding to secretin receptor (SCTR), a G-protein coupled receptor expressed in the basolateral domain of several cells (By similarity). Acts as a key gastrointestinal hormone by regulating the pH of the duodenal content (By similarity). Secreted by S cells of the duodenum in the crypts of Lieberkuehn and regulates the pH of the duodenum by (1) inhibiting the secretion of gastric acid from the parietal cells of the stomach and (2) stimulating the production of bicarbonate (NaHCO(3)) from the ductal cells of the pancreas (PubMed:13879310, PubMed:3626755). Production of bicarbonate is essential to neutralize the pH and ensure no damage is done to the small intestine by the gastric acid (PubMed:13879310). In addition to regulating the pH of the duodenal content, plays a central role in diet induced thermogenesis: acts as a non-sympathetic brown fat (BAT) activator mediating prandial thermogenesis, which consequentially induces satiation (By similarity). Mechanistically, secretin released by the gut after a meal binds to secretin receptor (SCTR) in brown adipocytes, activating brown fat thermogenesis by stimulating lipolysis, which is sensed in the brain and promotes satiation. Also able to stimulate lipolysis in white adipocytes (By similarity). Also plays an important role in cellular osmoregulation: released into the systemic circulation in response to hyperosmolality and acts at different levels in the hypothalamus, pituitary and kidney to regulate water homeostasis (By similarity). Also plays a role in the central nervous system, possibly by acting as a neuropeptide hormone: required for hippocampal synaptic function and neural progenitor cells maintenance (By similarity).</text>
</comment>
<comment type="subcellular location">
    <subcellularLocation>
        <location evidence="6">Secreted</location>
    </subcellularLocation>
</comment>
<comment type="similarity">
    <text evidence="8">Belongs to the glucagon family.</text>
</comment>
<accession>P09910</accession>
<proteinExistence type="evidence at protein level"/>
<organism>
    <name type="scientific">Canis lupus familiaris</name>
    <name type="common">Dog</name>
    <name type="synonym">Canis familiaris</name>
    <dbReference type="NCBI Taxonomy" id="9615"/>
    <lineage>
        <taxon>Eukaryota</taxon>
        <taxon>Metazoa</taxon>
        <taxon>Chordata</taxon>
        <taxon>Craniata</taxon>
        <taxon>Vertebrata</taxon>
        <taxon>Euteleostomi</taxon>
        <taxon>Mammalia</taxon>
        <taxon>Eutheria</taxon>
        <taxon>Laurasiatheria</taxon>
        <taxon>Carnivora</taxon>
        <taxon>Caniformia</taxon>
        <taxon>Canidae</taxon>
        <taxon>Canis</taxon>
    </lineage>
</organism>